<organism>
    <name type="scientific">Xenopus laevis</name>
    <name type="common">African clawed frog</name>
    <dbReference type="NCBI Taxonomy" id="8355"/>
    <lineage>
        <taxon>Eukaryota</taxon>
        <taxon>Metazoa</taxon>
        <taxon>Chordata</taxon>
        <taxon>Craniata</taxon>
        <taxon>Vertebrata</taxon>
        <taxon>Euteleostomi</taxon>
        <taxon>Amphibia</taxon>
        <taxon>Batrachia</taxon>
        <taxon>Anura</taxon>
        <taxon>Pipoidea</taxon>
        <taxon>Pipidae</taxon>
        <taxon>Xenopodinae</taxon>
        <taxon>Xenopus</taxon>
        <taxon>Xenopus</taxon>
    </lineage>
</organism>
<reference key="1">
    <citation type="submission" date="2000-01" db="EMBL/GenBank/DDBJ databases">
        <title>cDNA of biglycan of Xenopus laevis.</title>
        <authorList>
            <person name="Goto T."/>
            <person name="Kubota H.Y."/>
        </authorList>
    </citation>
    <scope>NUCLEOTIDE SEQUENCE [MRNA]</scope>
</reference>
<evidence type="ECO:0000250" key="1"/>
<evidence type="ECO:0000250" key="2">
    <source>
        <dbReference type="UniProtKB" id="P21810"/>
    </source>
</evidence>
<evidence type="ECO:0000250" key="3">
    <source>
        <dbReference type="UniProtKB" id="P47853"/>
    </source>
</evidence>
<evidence type="ECO:0000255" key="4"/>
<evidence type="ECO:0000305" key="5"/>
<feature type="signal peptide" evidence="3">
    <location>
        <begin position="1"/>
        <end position="16"/>
    </location>
</feature>
<feature type="propeptide" id="PRO_0000032701" evidence="2">
    <location>
        <begin position="17"/>
        <end position="37"/>
    </location>
</feature>
<feature type="chain" id="PRO_0000032702" description="Biglycan">
    <location>
        <begin position="38"/>
        <end position="368"/>
    </location>
</feature>
<feature type="repeat" description="LRR 1">
    <location>
        <begin position="82"/>
        <end position="102"/>
    </location>
</feature>
<feature type="repeat" description="LRR 2">
    <location>
        <begin position="103"/>
        <end position="126"/>
    </location>
</feature>
<feature type="repeat" description="LRR 3">
    <location>
        <begin position="127"/>
        <end position="150"/>
    </location>
</feature>
<feature type="repeat" description="LRR 4">
    <location>
        <begin position="151"/>
        <end position="171"/>
    </location>
</feature>
<feature type="repeat" description="LRR 5">
    <location>
        <begin position="172"/>
        <end position="195"/>
    </location>
</feature>
<feature type="repeat" description="LRR 6">
    <location>
        <begin position="196"/>
        <end position="220"/>
    </location>
</feature>
<feature type="repeat" description="LRR 7">
    <location>
        <begin position="221"/>
        <end position="241"/>
    </location>
</feature>
<feature type="repeat" description="LRR 8">
    <location>
        <begin position="242"/>
        <end position="265"/>
    </location>
</feature>
<feature type="repeat" description="LRR 9">
    <location>
        <begin position="266"/>
        <end position="289"/>
    </location>
</feature>
<feature type="repeat" description="LRR 10">
    <location>
        <begin position="290"/>
        <end position="312"/>
    </location>
</feature>
<feature type="repeat" description="LRR 11">
    <location>
        <begin position="313"/>
        <end position="342"/>
    </location>
</feature>
<feature type="repeat" description="LRR 12">
    <location>
        <begin position="343"/>
        <end position="368"/>
    </location>
</feature>
<feature type="glycosylation site" description="N-linked (GlcNAc...) asparagine" evidence="4">
    <location>
        <position position="270"/>
    </location>
</feature>
<feature type="glycosylation site" description="N-linked (GlcNAc...) asparagine" evidence="4">
    <location>
        <position position="311"/>
    </location>
</feature>
<feature type="disulfide bond" evidence="1">
    <location>
        <begin position="63"/>
        <end position="69"/>
    </location>
</feature>
<feature type="disulfide bond" evidence="1">
    <location>
        <begin position="67"/>
        <end position="76"/>
    </location>
</feature>
<feature type="disulfide bond" evidence="1">
    <location>
        <begin position="321"/>
        <end position="354"/>
    </location>
</feature>
<name>PGS1_XENLA</name>
<accession>Q9IB75</accession>
<protein>
    <recommendedName>
        <fullName>Biglycan</fullName>
    </recommendedName>
</protein>
<dbReference type="EMBL" id="AB037269">
    <property type="protein sequence ID" value="BAA90246.1"/>
    <property type="molecule type" value="mRNA"/>
</dbReference>
<dbReference type="RefSeq" id="NP_001084178.1">
    <property type="nucleotide sequence ID" value="NM_001090709.1"/>
</dbReference>
<dbReference type="SMR" id="Q9IB75"/>
<dbReference type="GlyCosmos" id="Q9IB75">
    <property type="glycosylation" value="2 sites, No reported glycans"/>
</dbReference>
<dbReference type="AGR" id="Xenbase:XB-GENE-17331698"/>
<dbReference type="Xenbase" id="XB-GENE-17331698">
    <property type="gene designation" value="bgn.L"/>
</dbReference>
<dbReference type="OrthoDB" id="1111193at2759"/>
<dbReference type="Proteomes" id="UP000186698">
    <property type="component" value="Unplaced"/>
</dbReference>
<dbReference type="Bgee" id="399351">
    <property type="expression patterns" value="Expressed in camera-type eye and 17 other cell types or tissues"/>
</dbReference>
<dbReference type="GO" id="GO:0005615">
    <property type="term" value="C:extracellular space"/>
    <property type="evidence" value="ECO:0000318"/>
    <property type="project" value="GO_Central"/>
</dbReference>
<dbReference type="FunFam" id="3.80.10.10:FF:000038">
    <property type="entry name" value="Biglycan"/>
    <property type="match status" value="1"/>
</dbReference>
<dbReference type="Gene3D" id="3.80.10.10">
    <property type="entry name" value="Ribonuclease Inhibitor"/>
    <property type="match status" value="1"/>
</dbReference>
<dbReference type="InterPro" id="IPR001611">
    <property type="entry name" value="Leu-rich_rpt"/>
</dbReference>
<dbReference type="InterPro" id="IPR003591">
    <property type="entry name" value="Leu-rich_rpt_typical-subtyp"/>
</dbReference>
<dbReference type="InterPro" id="IPR032675">
    <property type="entry name" value="LRR_dom_sf"/>
</dbReference>
<dbReference type="InterPro" id="IPR000372">
    <property type="entry name" value="LRRNT"/>
</dbReference>
<dbReference type="InterPro" id="IPR050333">
    <property type="entry name" value="SLRP"/>
</dbReference>
<dbReference type="InterPro" id="IPR016352">
    <property type="entry name" value="SLRP_I_decor/aspor/byglycan"/>
</dbReference>
<dbReference type="PANTHER" id="PTHR45712">
    <property type="entry name" value="AGAP008170-PA"/>
    <property type="match status" value="1"/>
</dbReference>
<dbReference type="PANTHER" id="PTHR45712:SF11">
    <property type="entry name" value="BIGLYCAN"/>
    <property type="match status" value="1"/>
</dbReference>
<dbReference type="Pfam" id="PF13855">
    <property type="entry name" value="LRR_8"/>
    <property type="match status" value="3"/>
</dbReference>
<dbReference type="Pfam" id="PF01462">
    <property type="entry name" value="LRRNT"/>
    <property type="match status" value="1"/>
</dbReference>
<dbReference type="PIRSF" id="PIRSF002490">
    <property type="entry name" value="SLRP_I"/>
    <property type="match status" value="1"/>
</dbReference>
<dbReference type="SMART" id="SM00369">
    <property type="entry name" value="LRR_TYP"/>
    <property type="match status" value="8"/>
</dbReference>
<dbReference type="SMART" id="SM00013">
    <property type="entry name" value="LRRNT"/>
    <property type="match status" value="1"/>
</dbReference>
<dbReference type="SUPFAM" id="SSF52058">
    <property type="entry name" value="L domain-like"/>
    <property type="match status" value="1"/>
</dbReference>
<keyword id="KW-1015">Disulfide bond</keyword>
<keyword id="KW-0272">Extracellular matrix</keyword>
<keyword id="KW-0325">Glycoprotein</keyword>
<keyword id="KW-0433">Leucine-rich repeat</keyword>
<keyword id="KW-0654">Proteoglycan</keyword>
<keyword id="KW-1185">Reference proteome</keyword>
<keyword id="KW-0677">Repeat</keyword>
<keyword id="KW-0964">Secreted</keyword>
<keyword id="KW-0732">Signal</keyword>
<proteinExistence type="evidence at transcript level"/>
<sequence length="368" mass="41197">MKVLLLLCSCILVIHALPFEQRGFWDFSMDDGMAMMKDEEASGVGPIPTESIPDVGLPPMDLCPFGCQCHLRVVQCSDLGLTSIPKNLPKDTTLLDLQNNKITEIKKDDFKGLTNLYALVIVNNKISKINEKAFEPLQKMQKLYISKNNLEEIPKNLPKSLVELRIHENKIKKVPKGVFSGLKNMNCIEMGGNPLENGGIEAGAFDGLKLNYLRVSEAKLSGIPKGLPSTLNELHLDNNKIQAIEKEDLSQYASLYRLGLGHNNIRMIENGSLSFMPVLRELHLDNNKLSKVPPGLPDMKLLQVVYLHSNNITQVGVNDFCPIGFGVKRAYYNGISLFNNPVPYWEVQPATFRCVTDRLAIQFGNYRK</sequence>
<gene>
    <name type="primary">bgn</name>
</gene>
<comment type="function">
    <text evidence="1">May be involved in collagen fiber assembly.</text>
</comment>
<comment type="subcellular location">
    <subcellularLocation>
        <location evidence="1">Secreted</location>
        <location evidence="1">Extracellular space</location>
        <location evidence="1">Extracellular matrix</location>
    </subcellularLocation>
</comment>
<comment type="similarity">
    <text evidence="5">Belongs to the small leucine-rich proteoglycan (SLRP) family. SLRP class I subfamily.</text>
</comment>